<sequence>MNKLIPLPREFFARDTNLVSTELIGKVLYFQGTTAIITETESYIGEDDPACHAARGRTKRTDVMFGPAGFSYVYLIYGMYYCLNFVTEDEGFPAATLIRGVYVISHNNVYTIDTAKIKSQITDEKTQSIIIRKNRRIMKFYIPNLKASNLYLNGPGKLCKYLGINTSYNKCDLINNKDFFVSDIGLNLPYYSTTRIGITKGTDKLWRYIVTDPKMLY</sequence>
<protein>
    <recommendedName>
        <fullName>Putative 3-methyladenine DNA glycosylase</fullName>
        <ecNumber>3.2.2.-</ecNumber>
    </recommendedName>
</protein>
<proteinExistence type="inferred from homology"/>
<comment type="similarity">
    <text evidence="1">Belongs to the DNA glycosylase MPG family.</text>
</comment>
<accession>Q9ZDH7</accession>
<reference key="1">
    <citation type="journal article" date="1998" name="Nature">
        <title>The genome sequence of Rickettsia prowazekii and the origin of mitochondria.</title>
        <authorList>
            <person name="Andersson S.G.E."/>
            <person name="Zomorodipour A."/>
            <person name="Andersson J.O."/>
            <person name="Sicheritz-Ponten T."/>
            <person name="Alsmark U.C.M."/>
            <person name="Podowski R.M."/>
            <person name="Naeslund A.K."/>
            <person name="Eriksson A.-S."/>
            <person name="Winkler H.H."/>
            <person name="Kurland C.G."/>
        </authorList>
    </citation>
    <scope>NUCLEOTIDE SEQUENCE [LARGE SCALE GENOMIC DNA]</scope>
    <source>
        <strain>Madrid E</strain>
    </source>
</reference>
<organism>
    <name type="scientific">Rickettsia prowazekii (strain Madrid E)</name>
    <dbReference type="NCBI Taxonomy" id="272947"/>
    <lineage>
        <taxon>Bacteria</taxon>
        <taxon>Pseudomonadati</taxon>
        <taxon>Pseudomonadota</taxon>
        <taxon>Alphaproteobacteria</taxon>
        <taxon>Rickettsiales</taxon>
        <taxon>Rickettsiaceae</taxon>
        <taxon>Rickettsieae</taxon>
        <taxon>Rickettsia</taxon>
        <taxon>typhus group</taxon>
    </lineage>
</organism>
<name>3MGH_RICPR</name>
<keyword id="KW-0227">DNA damage</keyword>
<keyword id="KW-0234">DNA repair</keyword>
<keyword id="KW-0378">Hydrolase</keyword>
<keyword id="KW-1185">Reference proteome</keyword>
<gene>
    <name type="ordered locus">RP351</name>
</gene>
<feature type="chain" id="PRO_0000100102" description="Putative 3-methyladenine DNA glycosylase">
    <location>
        <begin position="1"/>
        <end position="217"/>
    </location>
</feature>
<feature type="domain" description="RPE2 insert">
    <location>
        <begin position="105"/>
        <end position="145"/>
    </location>
</feature>
<dbReference type="EC" id="3.2.2.-"/>
<dbReference type="EMBL" id="AJ235271">
    <property type="protein sequence ID" value="CAA14811.1"/>
    <property type="molecule type" value="Genomic_DNA"/>
</dbReference>
<dbReference type="PIR" id="A71692">
    <property type="entry name" value="A71692"/>
</dbReference>
<dbReference type="RefSeq" id="NP_220734.1">
    <property type="nucleotide sequence ID" value="NC_000963.1"/>
</dbReference>
<dbReference type="RefSeq" id="WP_004599421.1">
    <property type="nucleotide sequence ID" value="NC_000963.1"/>
</dbReference>
<dbReference type="SMR" id="Q9ZDH7"/>
<dbReference type="STRING" id="272947.gene:17555431"/>
<dbReference type="EnsemblBacteria" id="CAA14811">
    <property type="protein sequence ID" value="CAA14811"/>
    <property type="gene ID" value="CAA14811"/>
</dbReference>
<dbReference type="KEGG" id="rpr:RP351"/>
<dbReference type="PATRIC" id="fig|272947.5.peg.361"/>
<dbReference type="eggNOG" id="COG2094">
    <property type="taxonomic scope" value="Bacteria"/>
</dbReference>
<dbReference type="HOGENOM" id="CLU_060471_0_2_5"/>
<dbReference type="OrthoDB" id="9794313at2"/>
<dbReference type="Proteomes" id="UP000002480">
    <property type="component" value="Chromosome"/>
</dbReference>
<dbReference type="GO" id="GO:0003905">
    <property type="term" value="F:alkylbase DNA N-glycosylase activity"/>
    <property type="evidence" value="ECO:0007669"/>
    <property type="project" value="InterPro"/>
</dbReference>
<dbReference type="GO" id="GO:0003677">
    <property type="term" value="F:DNA binding"/>
    <property type="evidence" value="ECO:0007669"/>
    <property type="project" value="InterPro"/>
</dbReference>
<dbReference type="GO" id="GO:0006284">
    <property type="term" value="P:base-excision repair"/>
    <property type="evidence" value="ECO:0007669"/>
    <property type="project" value="InterPro"/>
</dbReference>
<dbReference type="CDD" id="cd00540">
    <property type="entry name" value="AAG"/>
    <property type="match status" value="1"/>
</dbReference>
<dbReference type="Gene3D" id="3.10.300.10">
    <property type="entry name" value="Methylpurine-DNA glycosylase (MPG)"/>
    <property type="match status" value="1"/>
</dbReference>
<dbReference type="HAMAP" id="MF_00527">
    <property type="entry name" value="3MGH"/>
    <property type="match status" value="1"/>
</dbReference>
<dbReference type="InterPro" id="IPR011034">
    <property type="entry name" value="Formyl_transferase-like_C_sf"/>
</dbReference>
<dbReference type="InterPro" id="IPR003180">
    <property type="entry name" value="MPG"/>
</dbReference>
<dbReference type="InterPro" id="IPR036995">
    <property type="entry name" value="MPG_sf"/>
</dbReference>
<dbReference type="NCBIfam" id="TIGR00567">
    <property type="entry name" value="3mg"/>
    <property type="match status" value="1"/>
</dbReference>
<dbReference type="NCBIfam" id="NF002004">
    <property type="entry name" value="PRK00802.1-4"/>
    <property type="match status" value="1"/>
</dbReference>
<dbReference type="PANTHER" id="PTHR10429">
    <property type="entry name" value="DNA-3-METHYLADENINE GLYCOSYLASE"/>
    <property type="match status" value="1"/>
</dbReference>
<dbReference type="PANTHER" id="PTHR10429:SF0">
    <property type="entry name" value="DNA-3-METHYLADENINE GLYCOSYLASE"/>
    <property type="match status" value="1"/>
</dbReference>
<dbReference type="Pfam" id="PF02245">
    <property type="entry name" value="Pur_DNA_glyco"/>
    <property type="match status" value="1"/>
</dbReference>
<dbReference type="SUPFAM" id="SSF50486">
    <property type="entry name" value="FMT C-terminal domain-like"/>
    <property type="match status" value="1"/>
</dbReference>
<evidence type="ECO:0000305" key="1"/>